<reference key="1">
    <citation type="submission" date="2008-05" db="EMBL/GenBank/DDBJ databases">
        <title>Genome sequence of Helicobacter pylori from the remote Amazon: traces of Asian ancestry of the first Americans.</title>
        <authorList>
            <person name="Kersulyte D."/>
            <person name="Kalia A."/>
            <person name="Gilman R.H."/>
            <person name="Berg D.E."/>
        </authorList>
    </citation>
    <scope>NUCLEOTIDE SEQUENCE [LARGE SCALE GENOMIC DNA]</scope>
    <source>
        <strain>Shi470</strain>
    </source>
</reference>
<gene>
    <name evidence="1" type="primary">rplV</name>
    <name type="ordered locus">HPSH_06795</name>
</gene>
<keyword id="KW-0687">Ribonucleoprotein</keyword>
<keyword id="KW-0689">Ribosomal protein</keyword>
<keyword id="KW-0694">RNA-binding</keyword>
<keyword id="KW-0699">rRNA-binding</keyword>
<feature type="chain" id="PRO_1000142271" description="Large ribosomal subunit protein uL22">
    <location>
        <begin position="1"/>
        <end position="122"/>
    </location>
</feature>
<feature type="region of interest" description="Disordered" evidence="2">
    <location>
        <begin position="102"/>
        <end position="122"/>
    </location>
</feature>
<evidence type="ECO:0000255" key="1">
    <source>
        <dbReference type="HAMAP-Rule" id="MF_01331"/>
    </source>
</evidence>
<evidence type="ECO:0000256" key="2">
    <source>
        <dbReference type="SAM" id="MobiDB-lite"/>
    </source>
</evidence>
<evidence type="ECO:0000305" key="3"/>
<proteinExistence type="inferred from homology"/>
<organism>
    <name type="scientific">Helicobacter pylori (strain Shi470)</name>
    <dbReference type="NCBI Taxonomy" id="512562"/>
    <lineage>
        <taxon>Bacteria</taxon>
        <taxon>Pseudomonadati</taxon>
        <taxon>Campylobacterota</taxon>
        <taxon>Epsilonproteobacteria</taxon>
        <taxon>Campylobacterales</taxon>
        <taxon>Helicobacteraceae</taxon>
        <taxon>Helicobacter</taxon>
    </lineage>
</organism>
<dbReference type="EMBL" id="CP001072">
    <property type="protein sequence ID" value="ACD48759.1"/>
    <property type="molecule type" value="Genomic_DNA"/>
</dbReference>
<dbReference type="RefSeq" id="WP_000030349.1">
    <property type="nucleotide sequence ID" value="NC_010698.2"/>
</dbReference>
<dbReference type="SMR" id="B2UV77"/>
<dbReference type="KEGG" id="hps:HPSH_06795"/>
<dbReference type="HOGENOM" id="CLU_083987_3_2_7"/>
<dbReference type="GO" id="GO:0022625">
    <property type="term" value="C:cytosolic large ribosomal subunit"/>
    <property type="evidence" value="ECO:0007669"/>
    <property type="project" value="TreeGrafter"/>
</dbReference>
<dbReference type="GO" id="GO:0019843">
    <property type="term" value="F:rRNA binding"/>
    <property type="evidence" value="ECO:0007669"/>
    <property type="project" value="UniProtKB-UniRule"/>
</dbReference>
<dbReference type="GO" id="GO:0003735">
    <property type="term" value="F:structural constituent of ribosome"/>
    <property type="evidence" value="ECO:0007669"/>
    <property type="project" value="InterPro"/>
</dbReference>
<dbReference type="GO" id="GO:0006412">
    <property type="term" value="P:translation"/>
    <property type="evidence" value="ECO:0007669"/>
    <property type="project" value="UniProtKB-UniRule"/>
</dbReference>
<dbReference type="CDD" id="cd00336">
    <property type="entry name" value="Ribosomal_L22"/>
    <property type="match status" value="1"/>
</dbReference>
<dbReference type="FunFam" id="3.90.470.10:FF:000007">
    <property type="entry name" value="50S ribosomal protein L22"/>
    <property type="match status" value="1"/>
</dbReference>
<dbReference type="Gene3D" id="3.90.470.10">
    <property type="entry name" value="Ribosomal protein L22/L17"/>
    <property type="match status" value="1"/>
</dbReference>
<dbReference type="HAMAP" id="MF_01331_B">
    <property type="entry name" value="Ribosomal_uL22_B"/>
    <property type="match status" value="1"/>
</dbReference>
<dbReference type="InterPro" id="IPR001063">
    <property type="entry name" value="Ribosomal_uL22"/>
</dbReference>
<dbReference type="InterPro" id="IPR005727">
    <property type="entry name" value="Ribosomal_uL22_bac/chlpt-type"/>
</dbReference>
<dbReference type="InterPro" id="IPR047867">
    <property type="entry name" value="Ribosomal_uL22_bac/org-type"/>
</dbReference>
<dbReference type="InterPro" id="IPR018260">
    <property type="entry name" value="Ribosomal_uL22_CS"/>
</dbReference>
<dbReference type="InterPro" id="IPR036394">
    <property type="entry name" value="Ribosomal_uL22_sf"/>
</dbReference>
<dbReference type="NCBIfam" id="TIGR01044">
    <property type="entry name" value="rplV_bact"/>
    <property type="match status" value="1"/>
</dbReference>
<dbReference type="PANTHER" id="PTHR13501">
    <property type="entry name" value="CHLOROPLAST 50S RIBOSOMAL PROTEIN L22-RELATED"/>
    <property type="match status" value="1"/>
</dbReference>
<dbReference type="PANTHER" id="PTHR13501:SF8">
    <property type="entry name" value="LARGE RIBOSOMAL SUBUNIT PROTEIN UL22M"/>
    <property type="match status" value="1"/>
</dbReference>
<dbReference type="Pfam" id="PF00237">
    <property type="entry name" value="Ribosomal_L22"/>
    <property type="match status" value="1"/>
</dbReference>
<dbReference type="SUPFAM" id="SSF54843">
    <property type="entry name" value="Ribosomal protein L22"/>
    <property type="match status" value="1"/>
</dbReference>
<dbReference type="PROSITE" id="PS00464">
    <property type="entry name" value="RIBOSOMAL_L22"/>
    <property type="match status" value="1"/>
</dbReference>
<comment type="function">
    <text evidence="1">This protein binds specifically to 23S rRNA; its binding is stimulated by other ribosomal proteins, e.g. L4, L17, and L20. It is important during the early stages of 50S assembly. It makes multiple contacts with different domains of the 23S rRNA in the assembled 50S subunit and ribosome (By similarity).</text>
</comment>
<comment type="function">
    <text evidence="1">The globular domain of the protein is located near the polypeptide exit tunnel on the outside of the subunit, while an extended beta-hairpin is found that lines the wall of the exit tunnel in the center of the 70S ribosome.</text>
</comment>
<comment type="subunit">
    <text evidence="1">Part of the 50S ribosomal subunit.</text>
</comment>
<comment type="similarity">
    <text evidence="1">Belongs to the universal ribosomal protein uL22 family.</text>
</comment>
<accession>B2UV77</accession>
<name>RL22_HELPS</name>
<protein>
    <recommendedName>
        <fullName evidence="1">Large ribosomal subunit protein uL22</fullName>
    </recommendedName>
    <alternativeName>
        <fullName evidence="3">50S ribosomal protein L22</fullName>
    </alternativeName>
</protein>
<sequence>MSKALLKFVRLSPTKARLIARQIQGMNAELAIASLEFTPNKAARVLSKVVASAVANGSLDAKSALIVSCRVDAGPVLRRSIPRAKGRATAIRKPTSHVFVEVAEGKEMKSSKSHKKNQAEGK</sequence>